<organism>
    <name type="scientific">Tityus stigmurus</name>
    <name type="common">Brazilian scorpion</name>
    <dbReference type="NCBI Taxonomy" id="50344"/>
    <lineage>
        <taxon>Eukaryota</taxon>
        <taxon>Metazoa</taxon>
        <taxon>Ecdysozoa</taxon>
        <taxon>Arthropoda</taxon>
        <taxon>Chelicerata</taxon>
        <taxon>Arachnida</taxon>
        <taxon>Scorpiones</taxon>
        <taxon>Buthida</taxon>
        <taxon>Buthoidea</taxon>
        <taxon>Buthidae</taxon>
        <taxon>Tityus</taxon>
    </lineage>
</organism>
<name>KA134_TITST</name>
<accession>P0C8L2</accession>
<proteinExistence type="evidence at protein level"/>
<protein>
    <recommendedName>
        <fullName>Potassium channel toxin alpha-KTx 13.4</fullName>
    </recommendedName>
    <alternativeName>
        <fullName>Toxin Tst-17</fullName>
    </alternativeName>
</protein>
<sequence length="23" mass="2418">GCRQCGGGCNKHGKCINGKCKCY</sequence>
<reference key="1">
    <citation type="journal article" date="2007" name="Comp. Biochem. Physiol.">
        <title>Proteomic analysis of the venom from the scorpion Tityus stigmurus: biochemical and physiological comparison with other Tityus species.</title>
        <authorList>
            <person name="Batista C.V.F."/>
            <person name="Roman-Gonzalez S.A."/>
            <person name="Salas-Castillo S.P."/>
            <person name="Zamudio F.Z."/>
            <person name="Gomez-Lagunas F."/>
            <person name="Possani L.D."/>
        </authorList>
    </citation>
    <scope>PROTEIN SEQUENCE</scope>
    <scope>FUNCTION</scope>
    <scope>MASS SPECTROMETRY</scope>
    <source>
        <tissue>Venom</tissue>
    </source>
</reference>
<dbReference type="GO" id="GO:0005576">
    <property type="term" value="C:extracellular region"/>
    <property type="evidence" value="ECO:0007669"/>
    <property type="project" value="UniProtKB-SubCell"/>
</dbReference>
<comment type="function">
    <text evidence="3">Blocks the potassium channel Shaker B.</text>
</comment>
<comment type="subcellular location">
    <subcellularLocation>
        <location>Secreted</location>
    </subcellularLocation>
</comment>
<comment type="tissue specificity">
    <text>Expressed by the venom gland.</text>
</comment>
<comment type="domain">
    <text evidence="4">Has the structural arrangement of an alpha-helix connected to antiparallel beta-sheets by disulfide bonds (CS-alpha/beta).</text>
</comment>
<comment type="mass spectrometry" mass="2412.0" method="Electrospray" evidence="3"/>
<comment type="similarity">
    <text evidence="4">Belongs to the short scorpion toxin superfamily. Potassium channel inhibitor family. Alpha-KTx 13 subfamily.</text>
</comment>
<feature type="peptide" id="PRO_0000356890" description="Potassium channel toxin alpha-KTx 13.4">
    <location>
        <begin position="1"/>
        <end position="23"/>
    </location>
</feature>
<feature type="region of interest" description="Interaction with Ca(2+)-activated K(+) channels" evidence="2">
    <location>
        <begin position="13"/>
        <end position="20"/>
    </location>
</feature>
<feature type="modified residue" description="Tyrosine amide" evidence="1">
    <location>
        <position position="23"/>
    </location>
</feature>
<feature type="disulfide bond" evidence="1">
    <location>
        <begin position="2"/>
        <end position="15"/>
    </location>
</feature>
<feature type="disulfide bond" evidence="1">
    <location>
        <begin position="5"/>
        <end position="20"/>
    </location>
</feature>
<feature type="disulfide bond" evidence="1">
    <location>
        <begin position="9"/>
        <end position="22"/>
    </location>
</feature>
<keyword id="KW-0027">Amidation</keyword>
<keyword id="KW-0903">Direct protein sequencing</keyword>
<keyword id="KW-1015">Disulfide bond</keyword>
<keyword id="KW-0964">Secreted</keyword>
<evidence type="ECO:0000250" key="1"/>
<evidence type="ECO:0000255" key="2"/>
<evidence type="ECO:0000269" key="3">
    <source>
    </source>
</evidence>
<evidence type="ECO:0000305" key="4"/>